<accession>Q5HPZ0</accession>
<name>PYRC_STAEQ</name>
<dbReference type="EC" id="3.5.2.3" evidence="1"/>
<dbReference type="EMBL" id="CP000029">
    <property type="protein sequence ID" value="AAW54170.1"/>
    <property type="molecule type" value="Genomic_DNA"/>
</dbReference>
<dbReference type="RefSeq" id="WP_002446243.1">
    <property type="nucleotide sequence ID" value="NC_002976.3"/>
</dbReference>
<dbReference type="SMR" id="Q5HPZ0"/>
<dbReference type="STRING" id="176279.SERP0767"/>
<dbReference type="KEGG" id="ser:SERP0767"/>
<dbReference type="eggNOG" id="COG0044">
    <property type="taxonomic scope" value="Bacteria"/>
</dbReference>
<dbReference type="HOGENOM" id="CLU_015572_1_0_9"/>
<dbReference type="UniPathway" id="UPA00070">
    <property type="reaction ID" value="UER00117"/>
</dbReference>
<dbReference type="Proteomes" id="UP000000531">
    <property type="component" value="Chromosome"/>
</dbReference>
<dbReference type="GO" id="GO:0005737">
    <property type="term" value="C:cytoplasm"/>
    <property type="evidence" value="ECO:0007669"/>
    <property type="project" value="TreeGrafter"/>
</dbReference>
<dbReference type="GO" id="GO:0004038">
    <property type="term" value="F:allantoinase activity"/>
    <property type="evidence" value="ECO:0007669"/>
    <property type="project" value="TreeGrafter"/>
</dbReference>
<dbReference type="GO" id="GO:0004151">
    <property type="term" value="F:dihydroorotase activity"/>
    <property type="evidence" value="ECO:0007669"/>
    <property type="project" value="UniProtKB-UniRule"/>
</dbReference>
<dbReference type="GO" id="GO:0008270">
    <property type="term" value="F:zinc ion binding"/>
    <property type="evidence" value="ECO:0007669"/>
    <property type="project" value="UniProtKB-UniRule"/>
</dbReference>
<dbReference type="GO" id="GO:0044205">
    <property type="term" value="P:'de novo' UMP biosynthetic process"/>
    <property type="evidence" value="ECO:0007669"/>
    <property type="project" value="UniProtKB-UniRule"/>
</dbReference>
<dbReference type="GO" id="GO:0006145">
    <property type="term" value="P:purine nucleobase catabolic process"/>
    <property type="evidence" value="ECO:0007669"/>
    <property type="project" value="TreeGrafter"/>
</dbReference>
<dbReference type="CDD" id="cd01317">
    <property type="entry name" value="DHOase_IIa"/>
    <property type="match status" value="1"/>
</dbReference>
<dbReference type="Gene3D" id="3.20.20.140">
    <property type="entry name" value="Metal-dependent hydrolases"/>
    <property type="match status" value="1"/>
</dbReference>
<dbReference type="Gene3D" id="2.30.40.10">
    <property type="entry name" value="Urease, subunit C, domain 1"/>
    <property type="match status" value="2"/>
</dbReference>
<dbReference type="HAMAP" id="MF_00220_B">
    <property type="entry name" value="PyrC_classI_B"/>
    <property type="match status" value="1"/>
</dbReference>
<dbReference type="InterPro" id="IPR006680">
    <property type="entry name" value="Amidohydro-rel"/>
</dbReference>
<dbReference type="InterPro" id="IPR004722">
    <property type="entry name" value="DHOase"/>
</dbReference>
<dbReference type="InterPro" id="IPR050138">
    <property type="entry name" value="DHOase/Allantoinase_Hydrolase"/>
</dbReference>
<dbReference type="InterPro" id="IPR002195">
    <property type="entry name" value="Dihydroorotase_CS"/>
</dbReference>
<dbReference type="InterPro" id="IPR011059">
    <property type="entry name" value="Metal-dep_hydrolase_composite"/>
</dbReference>
<dbReference type="InterPro" id="IPR032466">
    <property type="entry name" value="Metal_Hydrolase"/>
</dbReference>
<dbReference type="NCBIfam" id="NF006837">
    <property type="entry name" value="PRK09357.1-2"/>
    <property type="match status" value="1"/>
</dbReference>
<dbReference type="NCBIfam" id="TIGR00857">
    <property type="entry name" value="pyrC_multi"/>
    <property type="match status" value="1"/>
</dbReference>
<dbReference type="PANTHER" id="PTHR43668">
    <property type="entry name" value="ALLANTOINASE"/>
    <property type="match status" value="1"/>
</dbReference>
<dbReference type="PANTHER" id="PTHR43668:SF2">
    <property type="entry name" value="ALLANTOINASE"/>
    <property type="match status" value="1"/>
</dbReference>
<dbReference type="Pfam" id="PF01979">
    <property type="entry name" value="Amidohydro_1"/>
    <property type="match status" value="1"/>
</dbReference>
<dbReference type="SUPFAM" id="SSF51338">
    <property type="entry name" value="Composite domain of metallo-dependent hydrolases"/>
    <property type="match status" value="1"/>
</dbReference>
<dbReference type="SUPFAM" id="SSF51556">
    <property type="entry name" value="Metallo-dependent hydrolases"/>
    <property type="match status" value="1"/>
</dbReference>
<dbReference type="PROSITE" id="PS00482">
    <property type="entry name" value="DIHYDROOROTASE_1"/>
    <property type="match status" value="1"/>
</dbReference>
<dbReference type="PROSITE" id="PS00483">
    <property type="entry name" value="DIHYDROOROTASE_2"/>
    <property type="match status" value="1"/>
</dbReference>
<feature type="chain" id="PRO_0000147253" description="Dihydroorotase">
    <location>
        <begin position="1"/>
        <end position="425"/>
    </location>
</feature>
<feature type="active site" evidence="1">
    <location>
        <position position="304"/>
    </location>
</feature>
<feature type="binding site" evidence="1">
    <location>
        <position position="59"/>
    </location>
    <ligand>
        <name>Zn(2+)</name>
        <dbReference type="ChEBI" id="CHEBI:29105"/>
        <label>1</label>
    </ligand>
</feature>
<feature type="binding site" evidence="1">
    <location>
        <begin position="61"/>
        <end position="63"/>
    </location>
    <ligand>
        <name>substrate</name>
    </ligand>
</feature>
<feature type="binding site" evidence="1">
    <location>
        <position position="61"/>
    </location>
    <ligand>
        <name>Zn(2+)</name>
        <dbReference type="ChEBI" id="CHEBI:29105"/>
        <label>1</label>
    </ligand>
</feature>
<feature type="binding site" evidence="1">
    <location>
        <position position="93"/>
    </location>
    <ligand>
        <name>substrate</name>
    </ligand>
</feature>
<feature type="binding site" evidence="1">
    <location>
        <position position="151"/>
    </location>
    <ligand>
        <name>Zn(2+)</name>
        <dbReference type="ChEBI" id="CHEBI:29105"/>
        <label>1</label>
    </ligand>
</feature>
<feature type="binding site" evidence="1">
    <location>
        <position position="151"/>
    </location>
    <ligand>
        <name>Zn(2+)</name>
        <dbReference type="ChEBI" id="CHEBI:29105"/>
        <label>2</label>
    </ligand>
</feature>
<feature type="binding site" evidence="1">
    <location>
        <position position="178"/>
    </location>
    <ligand>
        <name>Zn(2+)</name>
        <dbReference type="ChEBI" id="CHEBI:29105"/>
        <label>2</label>
    </ligand>
</feature>
<feature type="binding site" evidence="1">
    <location>
        <position position="231"/>
    </location>
    <ligand>
        <name>Zn(2+)</name>
        <dbReference type="ChEBI" id="CHEBI:29105"/>
        <label>2</label>
    </ligand>
</feature>
<feature type="binding site" evidence="1">
    <location>
        <position position="277"/>
    </location>
    <ligand>
        <name>substrate</name>
    </ligand>
</feature>
<feature type="binding site" evidence="1">
    <location>
        <position position="304"/>
    </location>
    <ligand>
        <name>Zn(2+)</name>
        <dbReference type="ChEBI" id="CHEBI:29105"/>
        <label>1</label>
    </ligand>
</feature>
<feature type="binding site" evidence="1">
    <location>
        <position position="308"/>
    </location>
    <ligand>
        <name>substrate</name>
    </ligand>
</feature>
<feature type="binding site" evidence="1">
    <location>
        <begin position="322"/>
        <end position="323"/>
    </location>
    <ligand>
        <name>substrate</name>
    </ligand>
</feature>
<comment type="function">
    <text evidence="1">Catalyzes the reversible cyclization of carbamoyl aspartate to dihydroorotate.</text>
</comment>
<comment type="catalytic activity">
    <reaction evidence="1">
        <text>(S)-dihydroorotate + H2O = N-carbamoyl-L-aspartate + H(+)</text>
        <dbReference type="Rhea" id="RHEA:24296"/>
        <dbReference type="ChEBI" id="CHEBI:15377"/>
        <dbReference type="ChEBI" id="CHEBI:15378"/>
        <dbReference type="ChEBI" id="CHEBI:30864"/>
        <dbReference type="ChEBI" id="CHEBI:32814"/>
        <dbReference type="EC" id="3.5.2.3"/>
    </reaction>
</comment>
<comment type="cofactor">
    <cofactor evidence="1">
        <name>Zn(2+)</name>
        <dbReference type="ChEBI" id="CHEBI:29105"/>
    </cofactor>
    <text evidence="1">Binds 2 Zn(2+) ions per subunit.</text>
</comment>
<comment type="pathway">
    <text evidence="1">Pyrimidine metabolism; UMP biosynthesis via de novo pathway; (S)-dihydroorotate from bicarbonate: step 3/3.</text>
</comment>
<comment type="similarity">
    <text evidence="1">Belongs to the metallo-dependent hydrolases superfamily. DHOase family. Class I DHOase subfamily.</text>
</comment>
<organism>
    <name type="scientific">Staphylococcus epidermidis (strain ATCC 35984 / DSM 28319 / BCRC 17069 / CCUG 31568 / BM 3577 / RP62A)</name>
    <dbReference type="NCBI Taxonomy" id="176279"/>
    <lineage>
        <taxon>Bacteria</taxon>
        <taxon>Bacillati</taxon>
        <taxon>Bacillota</taxon>
        <taxon>Bacilli</taxon>
        <taxon>Bacillales</taxon>
        <taxon>Staphylococcaceae</taxon>
        <taxon>Staphylococcus</taxon>
    </lineage>
</organism>
<sequence length="425" mass="46795">MKLIKNGKILKNGILKDTEILIDGKRIKQISSKINASSSNIEVIDAKGNLIAPGFVDVHVHLREPGGEHKETIESGTKAAARGGFTTVCPMPNTRPVPDTVEHVRELRQRISETAQVRVLPYAAITKRQAGTELVDFEKLALEGVFAFTDDGVGVQTASMMYAAMKQAAKVKKPIVAHCEDNSLIYGGAMHKGKRSEELGIPGIPNIAESVQIARDVLLAEATGCHYHVCHVSTKESVRVIRDAKKAGIHVTAEVTPHHLLLTENDVPGDDSNYKMNPPLRSNEDREALLEGLLDGTIDCIATDHAPHAKEEKEQPMTKAPFGIVGSETAFPLLYTHFVRRGNWSLQQLVDYFTIKPATIFNLNYGKLHKDSYADLTIIDLNTEKEIKSEDFLSKADNTPFIGEKVYGNPTLTMLKGEVVFEEEK</sequence>
<protein>
    <recommendedName>
        <fullName evidence="1">Dihydroorotase</fullName>
        <shortName evidence="1">DHOase</shortName>
        <ecNumber evidence="1">3.5.2.3</ecNumber>
    </recommendedName>
</protein>
<gene>
    <name evidence="1" type="primary">pyrC</name>
    <name type="ordered locus">SERP0767</name>
</gene>
<reference key="1">
    <citation type="journal article" date="2005" name="J. Bacteriol.">
        <title>Insights on evolution of virulence and resistance from the complete genome analysis of an early methicillin-resistant Staphylococcus aureus strain and a biofilm-producing methicillin-resistant Staphylococcus epidermidis strain.</title>
        <authorList>
            <person name="Gill S.R."/>
            <person name="Fouts D.E."/>
            <person name="Archer G.L."/>
            <person name="Mongodin E.F."/>
            <person name="DeBoy R.T."/>
            <person name="Ravel J."/>
            <person name="Paulsen I.T."/>
            <person name="Kolonay J.F."/>
            <person name="Brinkac L.M."/>
            <person name="Beanan M.J."/>
            <person name="Dodson R.J."/>
            <person name="Daugherty S.C."/>
            <person name="Madupu R."/>
            <person name="Angiuoli S.V."/>
            <person name="Durkin A.S."/>
            <person name="Haft D.H."/>
            <person name="Vamathevan J.J."/>
            <person name="Khouri H."/>
            <person name="Utterback T.R."/>
            <person name="Lee C."/>
            <person name="Dimitrov G."/>
            <person name="Jiang L."/>
            <person name="Qin H."/>
            <person name="Weidman J."/>
            <person name="Tran K."/>
            <person name="Kang K.H."/>
            <person name="Hance I.R."/>
            <person name="Nelson K.E."/>
            <person name="Fraser C.M."/>
        </authorList>
    </citation>
    <scope>NUCLEOTIDE SEQUENCE [LARGE SCALE GENOMIC DNA]</scope>
    <source>
        <strain>ATCC 35984 / DSM 28319 / BCRC 17069 / CCUG 31568 / BM 3577 / RP62A</strain>
    </source>
</reference>
<proteinExistence type="inferred from homology"/>
<evidence type="ECO:0000255" key="1">
    <source>
        <dbReference type="HAMAP-Rule" id="MF_00220"/>
    </source>
</evidence>
<keyword id="KW-0378">Hydrolase</keyword>
<keyword id="KW-0479">Metal-binding</keyword>
<keyword id="KW-0665">Pyrimidine biosynthesis</keyword>
<keyword id="KW-1185">Reference proteome</keyword>
<keyword id="KW-0862">Zinc</keyword>